<accession>Q9SGE2</accession>
<accession>Q9LMZ1</accession>
<name>SMR2_ARATH</name>
<reference key="1">
    <citation type="journal article" date="2000" name="Nature">
        <title>Sequence and analysis of chromosome 1 of the plant Arabidopsis thaliana.</title>
        <authorList>
            <person name="Theologis A."/>
            <person name="Ecker J.R."/>
            <person name="Palm C.J."/>
            <person name="Federspiel N.A."/>
            <person name="Kaul S."/>
            <person name="White O."/>
            <person name="Alonso J."/>
            <person name="Altafi H."/>
            <person name="Araujo R."/>
            <person name="Bowman C.L."/>
            <person name="Brooks S.Y."/>
            <person name="Buehler E."/>
            <person name="Chan A."/>
            <person name="Chao Q."/>
            <person name="Chen H."/>
            <person name="Cheuk R.F."/>
            <person name="Chin C.W."/>
            <person name="Chung M.K."/>
            <person name="Conn L."/>
            <person name="Conway A.B."/>
            <person name="Conway A.R."/>
            <person name="Creasy T.H."/>
            <person name="Dewar K."/>
            <person name="Dunn P."/>
            <person name="Etgu P."/>
            <person name="Feldblyum T.V."/>
            <person name="Feng J.-D."/>
            <person name="Fong B."/>
            <person name="Fujii C.Y."/>
            <person name="Gill J.E."/>
            <person name="Goldsmith A.D."/>
            <person name="Haas B."/>
            <person name="Hansen N.F."/>
            <person name="Hughes B."/>
            <person name="Huizar L."/>
            <person name="Hunter J.L."/>
            <person name="Jenkins J."/>
            <person name="Johnson-Hopson C."/>
            <person name="Khan S."/>
            <person name="Khaykin E."/>
            <person name="Kim C.J."/>
            <person name="Koo H.L."/>
            <person name="Kremenetskaia I."/>
            <person name="Kurtz D.B."/>
            <person name="Kwan A."/>
            <person name="Lam B."/>
            <person name="Langin-Hooper S."/>
            <person name="Lee A."/>
            <person name="Lee J.M."/>
            <person name="Lenz C.A."/>
            <person name="Li J.H."/>
            <person name="Li Y.-P."/>
            <person name="Lin X."/>
            <person name="Liu S.X."/>
            <person name="Liu Z.A."/>
            <person name="Luros J.S."/>
            <person name="Maiti R."/>
            <person name="Marziali A."/>
            <person name="Militscher J."/>
            <person name="Miranda M."/>
            <person name="Nguyen M."/>
            <person name="Nierman W.C."/>
            <person name="Osborne B.I."/>
            <person name="Pai G."/>
            <person name="Peterson J."/>
            <person name="Pham P.K."/>
            <person name="Rizzo M."/>
            <person name="Rooney T."/>
            <person name="Rowley D."/>
            <person name="Sakano H."/>
            <person name="Salzberg S.L."/>
            <person name="Schwartz J.R."/>
            <person name="Shinn P."/>
            <person name="Southwick A.M."/>
            <person name="Sun H."/>
            <person name="Tallon L.J."/>
            <person name="Tambunga G."/>
            <person name="Toriumi M.J."/>
            <person name="Town C.D."/>
            <person name="Utterback T."/>
            <person name="Van Aken S."/>
            <person name="Vaysberg M."/>
            <person name="Vysotskaia V.S."/>
            <person name="Walker M."/>
            <person name="Wu D."/>
            <person name="Yu G."/>
            <person name="Fraser C.M."/>
            <person name="Venter J.C."/>
            <person name="Davis R.W."/>
        </authorList>
    </citation>
    <scope>NUCLEOTIDE SEQUENCE [LARGE SCALE GENOMIC DNA]</scope>
    <source>
        <strain>cv. Columbia</strain>
    </source>
</reference>
<reference key="2">
    <citation type="journal article" date="2017" name="Plant J.">
        <title>Araport11: a complete reannotation of the Arabidopsis thaliana reference genome.</title>
        <authorList>
            <person name="Cheng C.Y."/>
            <person name="Krishnakumar V."/>
            <person name="Chan A.P."/>
            <person name="Thibaud-Nissen F."/>
            <person name="Schobel S."/>
            <person name="Town C.D."/>
        </authorList>
    </citation>
    <scope>GENOME REANNOTATION</scope>
    <source>
        <strain>cv. Columbia</strain>
    </source>
</reference>
<reference key="3">
    <citation type="journal article" date="2003" name="Science">
        <title>Empirical analysis of transcriptional activity in the Arabidopsis genome.</title>
        <authorList>
            <person name="Yamada K."/>
            <person name="Lim J."/>
            <person name="Dale J.M."/>
            <person name="Chen H."/>
            <person name="Shinn P."/>
            <person name="Palm C.J."/>
            <person name="Southwick A.M."/>
            <person name="Wu H.C."/>
            <person name="Kim C.J."/>
            <person name="Nguyen M."/>
            <person name="Pham P.K."/>
            <person name="Cheuk R.F."/>
            <person name="Karlin-Newmann G."/>
            <person name="Liu S.X."/>
            <person name="Lam B."/>
            <person name="Sakano H."/>
            <person name="Wu T."/>
            <person name="Yu G."/>
            <person name="Miranda M."/>
            <person name="Quach H.L."/>
            <person name="Tripp M."/>
            <person name="Chang C.H."/>
            <person name="Lee J.M."/>
            <person name="Toriumi M.J."/>
            <person name="Chan M.M."/>
            <person name="Tang C.C."/>
            <person name="Onodera C.S."/>
            <person name="Deng J.M."/>
            <person name="Akiyama K."/>
            <person name="Ansari Y."/>
            <person name="Arakawa T."/>
            <person name="Banh J."/>
            <person name="Banno F."/>
            <person name="Bowser L."/>
            <person name="Brooks S.Y."/>
            <person name="Carninci P."/>
            <person name="Chao Q."/>
            <person name="Choy N."/>
            <person name="Enju A."/>
            <person name="Goldsmith A.D."/>
            <person name="Gurjal M."/>
            <person name="Hansen N.F."/>
            <person name="Hayashizaki Y."/>
            <person name="Johnson-Hopson C."/>
            <person name="Hsuan V.W."/>
            <person name="Iida K."/>
            <person name="Karnes M."/>
            <person name="Khan S."/>
            <person name="Koesema E."/>
            <person name="Ishida J."/>
            <person name="Jiang P.X."/>
            <person name="Jones T."/>
            <person name="Kawai J."/>
            <person name="Kamiya A."/>
            <person name="Meyers C."/>
            <person name="Nakajima M."/>
            <person name="Narusaka M."/>
            <person name="Seki M."/>
            <person name="Sakurai T."/>
            <person name="Satou M."/>
            <person name="Tamse R."/>
            <person name="Vaysberg M."/>
            <person name="Wallender E.K."/>
            <person name="Wong C."/>
            <person name="Yamamura Y."/>
            <person name="Yuan S."/>
            <person name="Shinozaki K."/>
            <person name="Davis R.W."/>
            <person name="Theologis A."/>
            <person name="Ecker J.R."/>
        </authorList>
    </citation>
    <scope>NUCLEOTIDE SEQUENCE [LARGE SCALE MRNA]</scope>
    <source>
        <strain>cv. Columbia</strain>
    </source>
</reference>
<reference key="4">
    <citation type="submission" date="2006-07" db="EMBL/GenBank/DDBJ databases">
        <title>Large-scale analysis of RIKEN Arabidopsis full-length (RAFL) cDNAs.</title>
        <authorList>
            <person name="Totoki Y."/>
            <person name="Seki M."/>
            <person name="Ishida J."/>
            <person name="Nakajima M."/>
            <person name="Enju A."/>
            <person name="Kamiya A."/>
            <person name="Narusaka M."/>
            <person name="Shin-i T."/>
            <person name="Nakagawa M."/>
            <person name="Sakamoto N."/>
            <person name="Oishi K."/>
            <person name="Kohara Y."/>
            <person name="Kobayashi M."/>
            <person name="Toyoda A."/>
            <person name="Sakaki Y."/>
            <person name="Sakurai T."/>
            <person name="Iida K."/>
            <person name="Akiyama K."/>
            <person name="Satou M."/>
            <person name="Toyoda T."/>
            <person name="Konagaya A."/>
            <person name="Carninci P."/>
            <person name="Kawai J."/>
            <person name="Hayashizaki Y."/>
            <person name="Shinozaki K."/>
        </authorList>
    </citation>
    <scope>NUCLEOTIDE SEQUENCE [LARGE SCALE MRNA]</scope>
    <source>
        <strain>cv. Columbia</strain>
    </source>
</reference>
<reference key="5">
    <citation type="journal article" date="2006" name="Plant Cell">
        <title>SIAMESE, a plant-specific cell cycle regulator, controls endoreplication onset in Arabidopsis thaliana.</title>
        <authorList>
            <person name="Churchman M.L."/>
            <person name="Brown M.L."/>
            <person name="Kato N."/>
            <person name="Kirik V."/>
            <person name="Huelskamp M."/>
            <person name="Inze D."/>
            <person name="De Veylder L."/>
            <person name="Walker J.D."/>
            <person name="Zheng Z."/>
            <person name="Oppenheimer D.G."/>
            <person name="Gwin T."/>
            <person name="Churchman J."/>
            <person name="Larkin J.C."/>
        </authorList>
    </citation>
    <scope>SUBCELLULAR LOCATION</scope>
    <scope>INTERACTION WITH CYCD2-1</scope>
    <scope>TISSUE SPECIFICITY</scope>
</reference>
<reference key="6">
    <citation type="journal article" date="2010" name="Mol. Syst. Biol.">
        <title>Targeted interactomics reveals a complex core cell cycle machinery in Arabidopsis thaliana.</title>
        <authorList>
            <person name="Van Leene J."/>
            <person name="Hollunder J."/>
            <person name="Eeckhout D."/>
            <person name="Persiau G."/>
            <person name="Van De Slijke E."/>
            <person name="Stals H."/>
            <person name="Van Isterdael G."/>
            <person name="Verkest A."/>
            <person name="Neirynck S."/>
            <person name="Buffel Y."/>
            <person name="De Bodt S."/>
            <person name="Maere S."/>
            <person name="Laukens K."/>
            <person name="Pharazyn A."/>
            <person name="Ferreira P.C.G."/>
            <person name="Eloy N."/>
            <person name="Renne C."/>
            <person name="Meyer C."/>
            <person name="Faure J.-D."/>
            <person name="Steinbrenner J."/>
            <person name="Beynon J."/>
            <person name="Larkin J.C."/>
            <person name="Van de Peer Y."/>
            <person name="Hilson P."/>
            <person name="Kuiper M."/>
            <person name="De Veylder L."/>
            <person name="Van Onckelen H."/>
            <person name="Inze D."/>
            <person name="Witters E."/>
            <person name="De Jaeger G."/>
        </authorList>
    </citation>
    <scope>INTERACTION WITH CDKB1-1</scope>
</reference>
<reference key="7">
    <citation type="journal article" date="2014" name="Plant Cell">
        <title>The Arabidopsis SIAMESE-RELATED cyclin-dependent kinase inhibitors SMR5 and SMR7 regulate the DNA damage checkpoint in response to reactive oxygen species.</title>
        <authorList>
            <person name="Yi D."/>
            <person name="Alvim Kamei C.L."/>
            <person name="Cools T."/>
            <person name="Vanderauwera S."/>
            <person name="Takahashi N."/>
            <person name="Okushima Y."/>
            <person name="Eekhout T."/>
            <person name="Yoshiyama K.O."/>
            <person name="Larkin J."/>
            <person name="Van den Daele H."/>
            <person name="Conklin P."/>
            <person name="Britt A."/>
            <person name="Umeda M."/>
            <person name="De Veylder L."/>
        </authorList>
    </citation>
    <scope>TISSUE SPECIFICITY</scope>
    <scope>GENE FAMILY</scope>
    <scope>NOMENCLATURE</scope>
</reference>
<reference key="8">
    <citation type="journal article" date="2015" name="Plant Cell">
        <title>Functional conservation in the SIAMESE-RELATED family of cyclin-dependent kinase inhibitors in land plants.</title>
        <authorList>
            <person name="Kumar N."/>
            <person name="Harashima H."/>
            <person name="Kalve S."/>
            <person name="Bramsiepe J."/>
            <person name="Wang K."/>
            <person name="Sizani B.L."/>
            <person name="Bertrand L.L."/>
            <person name="Johnson M.C."/>
            <person name="Faulk C."/>
            <person name="Dale R."/>
            <person name="Simmons L.A."/>
            <person name="Churchman M.L."/>
            <person name="Sugimoto K."/>
            <person name="Kato N."/>
            <person name="Dasanayake M."/>
            <person name="Beemster G."/>
            <person name="Schnittger A."/>
            <person name="Larkin J.C."/>
        </authorList>
    </citation>
    <scope>FUNCTION</scope>
    <scope>GENE FAMILY</scope>
    <scope>NOMENCLATURE</scope>
    <scope>DISRUPTION PHENOTYPE</scope>
</reference>
<evidence type="ECO:0000256" key="1">
    <source>
        <dbReference type="SAM" id="MobiDB-lite"/>
    </source>
</evidence>
<evidence type="ECO:0000269" key="2">
    <source>
    </source>
</evidence>
<evidence type="ECO:0000269" key="3">
    <source>
    </source>
</evidence>
<evidence type="ECO:0000269" key="4">
    <source>
    </source>
</evidence>
<evidence type="ECO:0000269" key="5">
    <source>
    </source>
</evidence>
<evidence type="ECO:0000303" key="6">
    <source>
    </source>
</evidence>
<evidence type="ECO:0000303" key="7">
    <source>
    </source>
</evidence>
<gene>
    <name evidence="6 7" type="primary">SMR2</name>
    <name type="ordered locus">At1g08180</name>
    <name type="ORF">T23G18.4</name>
    <name type="ORF">T6D22.27</name>
</gene>
<organism>
    <name type="scientific">Arabidopsis thaliana</name>
    <name type="common">Mouse-ear cress</name>
    <dbReference type="NCBI Taxonomy" id="3702"/>
    <lineage>
        <taxon>Eukaryota</taxon>
        <taxon>Viridiplantae</taxon>
        <taxon>Streptophyta</taxon>
        <taxon>Embryophyta</taxon>
        <taxon>Tracheophyta</taxon>
        <taxon>Spermatophyta</taxon>
        <taxon>Magnoliopsida</taxon>
        <taxon>eudicotyledons</taxon>
        <taxon>Gunneridae</taxon>
        <taxon>Pentapetalae</taxon>
        <taxon>rosids</taxon>
        <taxon>malvids</taxon>
        <taxon>Brassicales</taxon>
        <taxon>Brassicaceae</taxon>
        <taxon>Camelineae</taxon>
        <taxon>Arabidopsis</taxon>
    </lineage>
</organism>
<protein>
    <recommendedName>
        <fullName evidence="6 7">Cyclin-dependent protein kinase inhibitor SMR2</fullName>
    </recommendedName>
    <alternativeName>
        <fullName evidence="6 7">Protein SIAMESE-RELATED 2</fullName>
    </alternativeName>
</protein>
<keyword id="KW-0131">Cell cycle</keyword>
<keyword id="KW-0539">Nucleus</keyword>
<keyword id="KW-0649">Protein kinase inhibitor</keyword>
<keyword id="KW-1185">Reference proteome</keyword>
<dbReference type="EMBL" id="AC011438">
    <property type="protein sequence ID" value="AAF18255.1"/>
    <property type="molecule type" value="Genomic_DNA"/>
</dbReference>
<dbReference type="EMBL" id="AC026875">
    <property type="protein sequence ID" value="AAF79829.1"/>
    <property type="molecule type" value="Genomic_DNA"/>
</dbReference>
<dbReference type="EMBL" id="CP002684">
    <property type="protein sequence ID" value="AEE28258.1"/>
    <property type="molecule type" value="Genomic_DNA"/>
</dbReference>
<dbReference type="EMBL" id="BT004747">
    <property type="protein sequence ID" value="AAO44013.1"/>
    <property type="molecule type" value="mRNA"/>
</dbReference>
<dbReference type="EMBL" id="BT005800">
    <property type="protein sequence ID" value="AAO64202.1"/>
    <property type="molecule type" value="mRNA"/>
</dbReference>
<dbReference type="EMBL" id="AK227946">
    <property type="protein sequence ID" value="BAE99914.1"/>
    <property type="molecule type" value="mRNA"/>
</dbReference>
<dbReference type="PIR" id="B86216">
    <property type="entry name" value="B86216"/>
</dbReference>
<dbReference type="RefSeq" id="NP_172296.1">
    <property type="nucleotide sequence ID" value="NM_100692.3"/>
</dbReference>
<dbReference type="BioGRID" id="22580">
    <property type="interactions" value="3"/>
</dbReference>
<dbReference type="FunCoup" id="Q9SGE2">
    <property type="interactions" value="2"/>
</dbReference>
<dbReference type="IntAct" id="Q9SGE2">
    <property type="interactions" value="4"/>
</dbReference>
<dbReference type="STRING" id="3702.Q9SGE2"/>
<dbReference type="PaxDb" id="3702-AT1G08180.1"/>
<dbReference type="ProteomicsDB" id="232643"/>
<dbReference type="EnsemblPlants" id="AT1G08180.1">
    <property type="protein sequence ID" value="AT1G08180.1"/>
    <property type="gene ID" value="AT1G08180"/>
</dbReference>
<dbReference type="GeneID" id="837339"/>
<dbReference type="Gramene" id="AT1G08180.1">
    <property type="protein sequence ID" value="AT1G08180.1"/>
    <property type="gene ID" value="AT1G08180"/>
</dbReference>
<dbReference type="KEGG" id="ath:AT1G08180"/>
<dbReference type="Araport" id="AT1G08180"/>
<dbReference type="TAIR" id="AT1G08180">
    <property type="gene designation" value="SMR2"/>
</dbReference>
<dbReference type="eggNOG" id="ENOG502SUX3">
    <property type="taxonomic scope" value="Eukaryota"/>
</dbReference>
<dbReference type="HOGENOM" id="CLU_2174516_0_0_1"/>
<dbReference type="InParanoid" id="Q9SGE2"/>
<dbReference type="OMA" id="VHEPNHI"/>
<dbReference type="OrthoDB" id="662905at2759"/>
<dbReference type="PhylomeDB" id="Q9SGE2"/>
<dbReference type="PRO" id="PR:Q9SGE2"/>
<dbReference type="Proteomes" id="UP000006548">
    <property type="component" value="Chromosome 1"/>
</dbReference>
<dbReference type="ExpressionAtlas" id="Q9SGE2">
    <property type="expression patterns" value="baseline and differential"/>
</dbReference>
<dbReference type="GO" id="GO:0005634">
    <property type="term" value="C:nucleus"/>
    <property type="evidence" value="ECO:0000314"/>
    <property type="project" value="UniProtKB"/>
</dbReference>
<dbReference type="GO" id="GO:0004860">
    <property type="term" value="F:protein kinase inhibitor activity"/>
    <property type="evidence" value="ECO:0007669"/>
    <property type="project" value="UniProtKB-KW"/>
</dbReference>
<dbReference type="GO" id="GO:0032875">
    <property type="term" value="P:regulation of DNA endoreduplication"/>
    <property type="evidence" value="ECO:0007669"/>
    <property type="project" value="InterPro"/>
</dbReference>
<dbReference type="InterPro" id="IPR040389">
    <property type="entry name" value="SMR"/>
</dbReference>
<dbReference type="PANTHER" id="PTHR33142">
    <property type="entry name" value="CYCLIN-DEPENDENT PROTEIN KINASE INHIBITOR SMR13"/>
    <property type="match status" value="1"/>
</dbReference>
<dbReference type="PANTHER" id="PTHR33142:SF89">
    <property type="entry name" value="CYCLIN-DEPENDENT PROTEIN KINASE INHIBITOR SMR2"/>
    <property type="match status" value="1"/>
</dbReference>
<proteinExistence type="evidence at protein level"/>
<comment type="function">
    <text evidence="5">Cyclin-dependent protein kinase (CDK) inhibitor that restricts cell proliferation and cooperates with SIM and SMR1 to promote endoreplication during leaf development (PubMed:26546445).</text>
</comment>
<comment type="subunit">
    <text evidence="2 3">Interacts with CYCD2-1 (PubMed:17098811). Interacts with CDKB1-1 (PubMed:20706207).</text>
</comment>
<comment type="subcellular location">
    <subcellularLocation>
        <location evidence="2">Nucleus</location>
    </subcellularLocation>
</comment>
<comment type="tissue specificity">
    <text evidence="2 4">Expressed at low levels in roots and stems (PubMed:17098811). Expressed in the root vascular tissue (PubMed:24399300).</text>
</comment>
<comment type="disruption phenotype">
    <text evidence="5">Larger leaves with an increased cell number.</text>
</comment>
<sequence length="111" mass="12910">MSKLLETLEEEKTVEQKPRSQEEEDHQDSSKKEELLESLCTPTSSDHKIPEVETCPPPPRKRPREISLTKKTRLSKDLRFFEATDVGSQEVETLFVHEPNHVRKKRRSNSA</sequence>
<feature type="chain" id="PRO_0000418065" description="Cyclin-dependent protein kinase inhibitor SMR2">
    <location>
        <begin position="1"/>
        <end position="111"/>
    </location>
</feature>
<feature type="region of interest" description="Disordered" evidence="1">
    <location>
        <begin position="1"/>
        <end position="66"/>
    </location>
</feature>
<feature type="compositionally biased region" description="Basic and acidic residues" evidence="1">
    <location>
        <begin position="10"/>
        <end position="35"/>
    </location>
</feature>